<protein>
    <recommendedName>
        <fullName evidence="1">Putative transport protein YpAngola_A1559</fullName>
    </recommendedName>
</protein>
<sequence>MNINVANLLNGNYILLLFVVLALGLCLGKLRLGSIQLGNAIGVLVVSLLLGQQHFAINTEALNLGFMLFIFCVGVEAGPNFFSIFFRDGKNYLMLALVMVGSAMILALGLGKLFGWDIGLTAGMLAGSMTSTPVLVGAGDTLRHTMANGSSLQQAQDNLSLGYALTYLIGLVSLILGARYLPKLQHQDLPTSAQQIARERGLDTDSQRKVYLPVIRAYRVGPELVAWADGKNLRELGIYRQTGCYIERIRRNGILANPDGDAVLQVGDEISLVGYPDAHSRLDPSFRNGKEVFDRDLLDMRIVTEEIVVKNSNAVGKRLSHLKLTDHGCFLNRVIRSQIEMPIDDNVVLNKGDVLQVSGDARRVKSVAEKIGFISIHSQVTDLLAFCSFFILGLMIGLITFQFSNFSFGIGNAAGLLLAGIMLGFLRANHPTFGYIPQGALNMVKEFGLMVFMAGVGLSAGGGINSSLGAVGGQMLISGLIVSLVPVVICFVFGAYVLRMNRALLFGAIMGARTCAPAMDIISDTARSNIPALGYAGTYAIANVLLTLAGSLIVILWPGILG</sequence>
<organism>
    <name type="scientific">Yersinia pestis bv. Antiqua (strain Angola)</name>
    <dbReference type="NCBI Taxonomy" id="349746"/>
    <lineage>
        <taxon>Bacteria</taxon>
        <taxon>Pseudomonadati</taxon>
        <taxon>Pseudomonadota</taxon>
        <taxon>Gammaproteobacteria</taxon>
        <taxon>Enterobacterales</taxon>
        <taxon>Yersiniaceae</taxon>
        <taxon>Yersinia</taxon>
    </lineage>
</organism>
<name>Y1559_YERPG</name>
<feature type="chain" id="PRO_1000135200" description="Putative transport protein YpAngola_A1559">
    <location>
        <begin position="1"/>
        <end position="562"/>
    </location>
</feature>
<feature type="transmembrane region" description="Helical" evidence="1">
    <location>
        <begin position="8"/>
        <end position="28"/>
    </location>
</feature>
<feature type="transmembrane region" description="Helical" evidence="1">
    <location>
        <begin position="37"/>
        <end position="57"/>
    </location>
</feature>
<feature type="transmembrane region" description="Helical" evidence="1">
    <location>
        <begin position="66"/>
        <end position="86"/>
    </location>
</feature>
<feature type="transmembrane region" description="Helical" evidence="1">
    <location>
        <begin position="94"/>
        <end position="114"/>
    </location>
</feature>
<feature type="transmembrane region" description="Helical" evidence="1">
    <location>
        <begin position="118"/>
        <end position="138"/>
    </location>
</feature>
<feature type="transmembrane region" description="Helical" evidence="1">
    <location>
        <begin position="158"/>
        <end position="178"/>
    </location>
</feature>
<feature type="transmembrane region" description="Helical" evidence="1">
    <location>
        <begin position="383"/>
        <end position="403"/>
    </location>
</feature>
<feature type="transmembrane region" description="Helical" evidence="1">
    <location>
        <begin position="406"/>
        <end position="426"/>
    </location>
</feature>
<feature type="transmembrane region" description="Helical" evidence="1">
    <location>
        <begin position="447"/>
        <end position="467"/>
    </location>
</feature>
<feature type="transmembrane region" description="Helical" evidence="1">
    <location>
        <begin position="475"/>
        <end position="495"/>
    </location>
</feature>
<feature type="transmembrane region" description="Helical" evidence="1">
    <location>
        <begin position="541"/>
        <end position="561"/>
    </location>
</feature>
<feature type="domain" description="RCK C-terminal 1" evidence="1">
    <location>
        <begin position="202"/>
        <end position="288"/>
    </location>
</feature>
<feature type="domain" description="RCK C-terminal 2" evidence="1">
    <location>
        <begin position="290"/>
        <end position="373"/>
    </location>
</feature>
<accession>A9R4U7</accession>
<gene>
    <name type="ordered locus">YpAngola_A1559</name>
</gene>
<comment type="subcellular location">
    <subcellularLocation>
        <location evidence="1">Cell membrane</location>
        <topology evidence="1">Multi-pass membrane protein</topology>
    </subcellularLocation>
</comment>
<comment type="similarity">
    <text evidence="1">Belongs to the AAE transporter (TC 2.A.81) family. YbjL subfamily.</text>
</comment>
<evidence type="ECO:0000255" key="1">
    <source>
        <dbReference type="HAMAP-Rule" id="MF_01015"/>
    </source>
</evidence>
<dbReference type="EMBL" id="CP000901">
    <property type="protein sequence ID" value="ABX85903.1"/>
    <property type="molecule type" value="Genomic_DNA"/>
</dbReference>
<dbReference type="RefSeq" id="WP_002208766.1">
    <property type="nucleotide sequence ID" value="NZ_CP009935.1"/>
</dbReference>
<dbReference type="SMR" id="A9R4U7"/>
<dbReference type="KEGG" id="ypg:YpAngola_A1559"/>
<dbReference type="PATRIC" id="fig|349746.12.peg.2523"/>
<dbReference type="GO" id="GO:0005886">
    <property type="term" value="C:plasma membrane"/>
    <property type="evidence" value="ECO:0007669"/>
    <property type="project" value="UniProtKB-SubCell"/>
</dbReference>
<dbReference type="GO" id="GO:0008324">
    <property type="term" value="F:monoatomic cation transmembrane transporter activity"/>
    <property type="evidence" value="ECO:0007669"/>
    <property type="project" value="InterPro"/>
</dbReference>
<dbReference type="GO" id="GO:0006813">
    <property type="term" value="P:potassium ion transport"/>
    <property type="evidence" value="ECO:0007669"/>
    <property type="project" value="InterPro"/>
</dbReference>
<dbReference type="FunFam" id="3.30.70.1450:FF:000003">
    <property type="entry name" value="Putative transport protein YbjL"/>
    <property type="match status" value="1"/>
</dbReference>
<dbReference type="Gene3D" id="3.30.70.1450">
    <property type="entry name" value="Regulator of K+ conductance, C-terminal domain"/>
    <property type="match status" value="2"/>
</dbReference>
<dbReference type="HAMAP" id="MF_01015">
    <property type="entry name" value="YbjL"/>
    <property type="match status" value="1"/>
</dbReference>
<dbReference type="InterPro" id="IPR050144">
    <property type="entry name" value="AAE_transporter"/>
</dbReference>
<dbReference type="InterPro" id="IPR006037">
    <property type="entry name" value="RCK_C"/>
</dbReference>
<dbReference type="InterPro" id="IPR036721">
    <property type="entry name" value="RCK_C_sf"/>
</dbReference>
<dbReference type="InterPro" id="IPR023017">
    <property type="entry name" value="Transp_YbjL_put"/>
</dbReference>
<dbReference type="InterPro" id="IPR006512">
    <property type="entry name" value="YidE_YbjL"/>
</dbReference>
<dbReference type="NCBIfam" id="NF003440">
    <property type="entry name" value="PRK04972.1"/>
    <property type="match status" value="1"/>
</dbReference>
<dbReference type="NCBIfam" id="TIGR01625">
    <property type="entry name" value="YidE_YbjL_dupl"/>
    <property type="match status" value="2"/>
</dbReference>
<dbReference type="PANTHER" id="PTHR30445">
    <property type="entry name" value="K(+)_H(+) ANTIPORTER SUBUNIT KHTT"/>
    <property type="match status" value="1"/>
</dbReference>
<dbReference type="PANTHER" id="PTHR30445:SF10">
    <property type="entry name" value="TRANSPORT PROTEIN YBJL-RELATED"/>
    <property type="match status" value="1"/>
</dbReference>
<dbReference type="Pfam" id="PF06826">
    <property type="entry name" value="Asp-Al_Ex"/>
    <property type="match status" value="2"/>
</dbReference>
<dbReference type="Pfam" id="PF02080">
    <property type="entry name" value="TrkA_C"/>
    <property type="match status" value="2"/>
</dbReference>
<dbReference type="SUPFAM" id="SSF116726">
    <property type="entry name" value="TrkA C-terminal domain-like"/>
    <property type="match status" value="2"/>
</dbReference>
<dbReference type="PROSITE" id="PS51202">
    <property type="entry name" value="RCK_C"/>
    <property type="match status" value="2"/>
</dbReference>
<proteinExistence type="inferred from homology"/>
<keyword id="KW-1003">Cell membrane</keyword>
<keyword id="KW-0472">Membrane</keyword>
<keyword id="KW-0677">Repeat</keyword>
<keyword id="KW-0812">Transmembrane</keyword>
<keyword id="KW-1133">Transmembrane helix</keyword>
<keyword id="KW-0813">Transport</keyword>
<reference key="1">
    <citation type="journal article" date="2010" name="J. Bacteriol.">
        <title>Genome sequence of the deep-rooted Yersinia pestis strain Angola reveals new insights into the evolution and pangenome of the plague bacterium.</title>
        <authorList>
            <person name="Eppinger M."/>
            <person name="Worsham P.L."/>
            <person name="Nikolich M.P."/>
            <person name="Riley D.R."/>
            <person name="Sebastian Y."/>
            <person name="Mou S."/>
            <person name="Achtman M."/>
            <person name="Lindler L.E."/>
            <person name="Ravel J."/>
        </authorList>
    </citation>
    <scope>NUCLEOTIDE SEQUENCE [LARGE SCALE GENOMIC DNA]</scope>
    <source>
        <strain>Angola</strain>
    </source>
</reference>